<sequence length="318" mass="35307">MGMSDIMWLDVSWAWLVLTAVLLAAAVFYLYTLILSHLAKTTVRNKVVLITDSLSTVGNECAKLFHAGGARLILCGSNWEKLEALAEQLTSQSDPTLTFPPKLVELDFSDMESVPEVISEILECFCCLDVLVFNSSMKLKAPVHSLSLQMDRLLMDVNYFGPITLVKGFLPSLISRRSGHILLVNSIQGKLAMPFRTTYAASKHAVQAFFECLRAEVQEYGITVSTINHTFIKTSSSIPKDEITARSMKTDHRQTPLGVSPKDVATELLRTLSSKKKEILMARWVPKAALYVRSLFPNLFFAIMAARVSNTVAETPDD</sequence>
<reference key="1">
    <citation type="submission" date="2005-03" db="EMBL/GenBank/DDBJ databases">
        <authorList>
            <consortium name="NIH - Zebrafish Gene Collection (ZGC) project"/>
        </authorList>
    </citation>
    <scope>NUCLEOTIDE SEQUENCE [LARGE SCALE MRNA]</scope>
    <source>
        <tissue>Embryo</tissue>
    </source>
</reference>
<comment type="function">
    <text evidence="4">Putative oxidoreductase.</text>
</comment>
<comment type="subcellular location">
    <subcellularLocation>
        <location evidence="4">Secreted</location>
    </subcellularLocation>
</comment>
<comment type="similarity">
    <text evidence="4">Belongs to the short-chain dehydrogenases/reductases (SDR) family.</text>
</comment>
<proteinExistence type="evidence at transcript level"/>
<evidence type="ECO:0000250" key="1"/>
<evidence type="ECO:0000255" key="2"/>
<evidence type="ECO:0000255" key="3">
    <source>
        <dbReference type="PROSITE-ProRule" id="PRU10001"/>
    </source>
</evidence>
<evidence type="ECO:0000305" key="4"/>
<protein>
    <recommendedName>
        <fullName>Dehydrogenase/reductase SDR family member 7C-B</fullName>
        <ecNumber>1.1.-.-</ecNumber>
    </recommendedName>
</protein>
<keyword id="KW-0520">NAD</keyword>
<keyword id="KW-0521">NADP</keyword>
<keyword id="KW-0560">Oxidoreductase</keyword>
<keyword id="KW-1185">Reference proteome</keyword>
<keyword id="KW-0964">Secreted</keyword>
<keyword id="KW-0732">Signal</keyword>
<accession>Q5BL28</accession>
<dbReference type="EC" id="1.1.-.-"/>
<dbReference type="EMBL" id="BC090822">
    <property type="protein sequence ID" value="AAH90822.1"/>
    <property type="molecule type" value="mRNA"/>
</dbReference>
<dbReference type="RefSeq" id="NP_001013557.1">
    <property type="nucleotide sequence ID" value="NM_001013539.1"/>
</dbReference>
<dbReference type="SMR" id="Q5BL28"/>
<dbReference type="FunCoup" id="Q5BL28">
    <property type="interactions" value="2"/>
</dbReference>
<dbReference type="STRING" id="7955.ENSDARP00000057639"/>
<dbReference type="PaxDb" id="7955-ENSDARP00000057639"/>
<dbReference type="GeneID" id="558764"/>
<dbReference type="KEGG" id="dre:558764"/>
<dbReference type="AGR" id="ZFIN:ZDB-GENE-050320-114"/>
<dbReference type="CTD" id="558764"/>
<dbReference type="ZFIN" id="ZDB-GENE-050320-114">
    <property type="gene designation" value="dhrs7ca"/>
</dbReference>
<dbReference type="eggNOG" id="KOG1205">
    <property type="taxonomic scope" value="Eukaryota"/>
</dbReference>
<dbReference type="InParanoid" id="Q5BL28"/>
<dbReference type="OrthoDB" id="5307821at2759"/>
<dbReference type="PhylomeDB" id="Q5BL28"/>
<dbReference type="PRO" id="PR:Q5BL28"/>
<dbReference type="Proteomes" id="UP000000437">
    <property type="component" value="Chromosome 3"/>
</dbReference>
<dbReference type="GO" id="GO:0005576">
    <property type="term" value="C:extracellular region"/>
    <property type="evidence" value="ECO:0007669"/>
    <property type="project" value="UniProtKB-SubCell"/>
</dbReference>
<dbReference type="GO" id="GO:0016616">
    <property type="term" value="F:oxidoreductase activity, acting on the CH-OH group of donors, NAD or NADP as acceptor"/>
    <property type="evidence" value="ECO:0000318"/>
    <property type="project" value="GO_Central"/>
</dbReference>
<dbReference type="GO" id="GO:0006874">
    <property type="term" value="P:intracellular calcium ion homeostasis"/>
    <property type="evidence" value="ECO:0000318"/>
    <property type="project" value="GO_Central"/>
</dbReference>
<dbReference type="CDD" id="cd05332">
    <property type="entry name" value="11beta-HSD1_like_SDR_c"/>
    <property type="match status" value="1"/>
</dbReference>
<dbReference type="Gene3D" id="3.40.50.720">
    <property type="entry name" value="NAD(P)-binding Rossmann-like Domain"/>
    <property type="match status" value="1"/>
</dbReference>
<dbReference type="InterPro" id="IPR036291">
    <property type="entry name" value="NAD(P)-bd_dom_sf"/>
</dbReference>
<dbReference type="InterPro" id="IPR020904">
    <property type="entry name" value="Sc_DH/Rdtase_CS"/>
</dbReference>
<dbReference type="InterPro" id="IPR002347">
    <property type="entry name" value="SDR_fam"/>
</dbReference>
<dbReference type="InterPro" id="IPR052148">
    <property type="entry name" value="SDR_family_member_7C"/>
</dbReference>
<dbReference type="PANTHER" id="PTHR44668">
    <property type="match status" value="1"/>
</dbReference>
<dbReference type="PANTHER" id="PTHR44668:SF3">
    <property type="entry name" value="DEHYDROGENASE_REDUCTASE SDR FAMILY MEMBER 7C-B"/>
    <property type="match status" value="1"/>
</dbReference>
<dbReference type="Pfam" id="PF00106">
    <property type="entry name" value="adh_short"/>
    <property type="match status" value="1"/>
</dbReference>
<dbReference type="PRINTS" id="PR00081">
    <property type="entry name" value="GDHRDH"/>
</dbReference>
<dbReference type="SUPFAM" id="SSF51735">
    <property type="entry name" value="NAD(P)-binding Rossmann-fold domains"/>
    <property type="match status" value="1"/>
</dbReference>
<dbReference type="PROSITE" id="PS00061">
    <property type="entry name" value="ADH_SHORT"/>
    <property type="match status" value="1"/>
</dbReference>
<feature type="signal peptide" evidence="2">
    <location>
        <begin position="1"/>
        <end position="32"/>
    </location>
</feature>
<feature type="chain" id="PRO_0000333758" description="Dehydrogenase/reductase SDR family member 7C-B">
    <location>
        <begin position="33"/>
        <end position="318"/>
    </location>
</feature>
<feature type="active site" description="Proton acceptor" evidence="3">
    <location>
        <position position="199"/>
    </location>
</feature>
<feature type="binding site" evidence="1">
    <location>
        <begin position="49"/>
        <end position="73"/>
    </location>
    <ligand>
        <name>NAD(+)</name>
        <dbReference type="ChEBI" id="CHEBI:57540"/>
    </ligand>
</feature>
<feature type="binding site" evidence="2">
    <location>
        <position position="186"/>
    </location>
    <ligand>
        <name>substrate</name>
    </ligand>
</feature>
<gene>
    <name type="primary">dhrs7cb</name>
    <name type="ORF">zgc:101633</name>
</gene>
<organism>
    <name type="scientific">Danio rerio</name>
    <name type="common">Zebrafish</name>
    <name type="synonym">Brachydanio rerio</name>
    <dbReference type="NCBI Taxonomy" id="7955"/>
    <lineage>
        <taxon>Eukaryota</taxon>
        <taxon>Metazoa</taxon>
        <taxon>Chordata</taxon>
        <taxon>Craniata</taxon>
        <taxon>Vertebrata</taxon>
        <taxon>Euteleostomi</taxon>
        <taxon>Actinopterygii</taxon>
        <taxon>Neopterygii</taxon>
        <taxon>Teleostei</taxon>
        <taxon>Ostariophysi</taxon>
        <taxon>Cypriniformes</taxon>
        <taxon>Danionidae</taxon>
        <taxon>Danioninae</taxon>
        <taxon>Danio</taxon>
    </lineage>
</organism>
<name>DS7CB_DANRE</name>